<sequence length="547" mass="57291">MAAKDVKFGNDARVKMLAGVNILADAVKVTLGPKGRNVVLDKSFGAPTITKDGVSVAREIELEDKFENMGAQMVKEVASKANDAAGDGTTTATVLAQAIVNEGLKAVAAGMNPMDLKRGIDKAVTAVVTELKALSKPCETSKEIEQVGTISANSDSIVGQIIAQAMDKVGKEGVITVEDGTGLEDELAVVEGMQFDRGYLSPYFINKPETATVELDNPFILLVDKKVSNIRELLPVLEGVAKAGKPLLIIAEDVEGEALATLVVNTMRGIVKVAAVKAPGFGDRRKAMLQDIAILTAGTVISEEIGMELEKATLEDLGQAKRVVINKDNTTIIDGIGDEAQIQGRVAQIRQQIEESTSDYDKEKLQERVAKLAGGVAVIKVGAATEVEMKEKKARVEDALHATRAAVEEGIVAGGGVALIRAASKVAGLQGDNEEQNVGIKLALRAMEAPLRQIVANAGEEASIVASAVKNGEGNFGYNAGTEQYGDMIEMGILDPTKVTRSALQFAASVAGLMITTECMVTDLPKEDKADLGAAGMGGMGGMGGMM</sequence>
<dbReference type="EC" id="5.6.1.7" evidence="1"/>
<dbReference type="EMBL" id="U30165">
    <property type="protein sequence ID" value="AAA84916.1"/>
    <property type="molecule type" value="Genomic_DNA"/>
</dbReference>
<dbReference type="EMBL" id="AE004439">
    <property type="protein sequence ID" value="AAK03191.1"/>
    <property type="molecule type" value="Genomic_DNA"/>
</dbReference>
<dbReference type="PIR" id="JC4519">
    <property type="entry name" value="JC4519"/>
</dbReference>
<dbReference type="RefSeq" id="WP_010907019.1">
    <property type="nucleotide sequence ID" value="NC_002663.1"/>
</dbReference>
<dbReference type="SMR" id="Q59687"/>
<dbReference type="STRING" id="272843.PM1107"/>
<dbReference type="EnsemblBacteria" id="AAK03191">
    <property type="protein sequence ID" value="AAK03191"/>
    <property type="gene ID" value="PM1107"/>
</dbReference>
<dbReference type="KEGG" id="pmu:PM1107"/>
<dbReference type="PATRIC" id="fig|272843.6.peg.1120"/>
<dbReference type="HOGENOM" id="CLU_016503_3_0_6"/>
<dbReference type="OrthoDB" id="9766614at2"/>
<dbReference type="Proteomes" id="UP000000809">
    <property type="component" value="Chromosome"/>
</dbReference>
<dbReference type="GO" id="GO:0005737">
    <property type="term" value="C:cytoplasm"/>
    <property type="evidence" value="ECO:0007669"/>
    <property type="project" value="UniProtKB-SubCell"/>
</dbReference>
<dbReference type="GO" id="GO:0005524">
    <property type="term" value="F:ATP binding"/>
    <property type="evidence" value="ECO:0007669"/>
    <property type="project" value="UniProtKB-UniRule"/>
</dbReference>
<dbReference type="GO" id="GO:0140662">
    <property type="term" value="F:ATP-dependent protein folding chaperone"/>
    <property type="evidence" value="ECO:0007669"/>
    <property type="project" value="InterPro"/>
</dbReference>
<dbReference type="GO" id="GO:0016853">
    <property type="term" value="F:isomerase activity"/>
    <property type="evidence" value="ECO:0007669"/>
    <property type="project" value="UniProtKB-KW"/>
</dbReference>
<dbReference type="GO" id="GO:0051082">
    <property type="term" value="F:unfolded protein binding"/>
    <property type="evidence" value="ECO:0007669"/>
    <property type="project" value="UniProtKB-UniRule"/>
</dbReference>
<dbReference type="GO" id="GO:0042026">
    <property type="term" value="P:protein refolding"/>
    <property type="evidence" value="ECO:0007669"/>
    <property type="project" value="UniProtKB-UniRule"/>
</dbReference>
<dbReference type="CDD" id="cd03344">
    <property type="entry name" value="GroEL"/>
    <property type="match status" value="1"/>
</dbReference>
<dbReference type="FunFam" id="1.10.560.10:FF:000001">
    <property type="entry name" value="60 kDa chaperonin"/>
    <property type="match status" value="1"/>
</dbReference>
<dbReference type="FunFam" id="3.50.7.10:FF:000001">
    <property type="entry name" value="60 kDa chaperonin"/>
    <property type="match status" value="1"/>
</dbReference>
<dbReference type="Gene3D" id="3.50.7.10">
    <property type="entry name" value="GroEL"/>
    <property type="match status" value="1"/>
</dbReference>
<dbReference type="Gene3D" id="1.10.560.10">
    <property type="entry name" value="GroEL-like equatorial domain"/>
    <property type="match status" value="1"/>
</dbReference>
<dbReference type="Gene3D" id="3.30.260.10">
    <property type="entry name" value="TCP-1-like chaperonin intermediate domain"/>
    <property type="match status" value="1"/>
</dbReference>
<dbReference type="HAMAP" id="MF_00600">
    <property type="entry name" value="CH60"/>
    <property type="match status" value="1"/>
</dbReference>
<dbReference type="InterPro" id="IPR018370">
    <property type="entry name" value="Chaperonin_Cpn60_CS"/>
</dbReference>
<dbReference type="InterPro" id="IPR001844">
    <property type="entry name" value="Cpn60/GroEL"/>
</dbReference>
<dbReference type="InterPro" id="IPR002423">
    <property type="entry name" value="Cpn60/GroEL/TCP-1"/>
</dbReference>
<dbReference type="InterPro" id="IPR027409">
    <property type="entry name" value="GroEL-like_apical_dom_sf"/>
</dbReference>
<dbReference type="InterPro" id="IPR027413">
    <property type="entry name" value="GROEL-like_equatorial_sf"/>
</dbReference>
<dbReference type="InterPro" id="IPR027410">
    <property type="entry name" value="TCP-1-like_intermed_sf"/>
</dbReference>
<dbReference type="NCBIfam" id="TIGR02348">
    <property type="entry name" value="GroEL"/>
    <property type="match status" value="1"/>
</dbReference>
<dbReference type="NCBIfam" id="NF000592">
    <property type="entry name" value="PRK00013.1"/>
    <property type="match status" value="1"/>
</dbReference>
<dbReference type="NCBIfam" id="NF009487">
    <property type="entry name" value="PRK12849.1"/>
    <property type="match status" value="1"/>
</dbReference>
<dbReference type="NCBIfam" id="NF009488">
    <property type="entry name" value="PRK12850.1"/>
    <property type="match status" value="1"/>
</dbReference>
<dbReference type="NCBIfam" id="NF009489">
    <property type="entry name" value="PRK12851.1"/>
    <property type="match status" value="1"/>
</dbReference>
<dbReference type="PANTHER" id="PTHR45633">
    <property type="entry name" value="60 KDA HEAT SHOCK PROTEIN, MITOCHONDRIAL"/>
    <property type="match status" value="1"/>
</dbReference>
<dbReference type="Pfam" id="PF00118">
    <property type="entry name" value="Cpn60_TCP1"/>
    <property type="match status" value="1"/>
</dbReference>
<dbReference type="PRINTS" id="PR00298">
    <property type="entry name" value="CHAPERONIN60"/>
</dbReference>
<dbReference type="SUPFAM" id="SSF52029">
    <property type="entry name" value="GroEL apical domain-like"/>
    <property type="match status" value="1"/>
</dbReference>
<dbReference type="SUPFAM" id="SSF48592">
    <property type="entry name" value="GroEL equatorial domain-like"/>
    <property type="match status" value="1"/>
</dbReference>
<dbReference type="SUPFAM" id="SSF54849">
    <property type="entry name" value="GroEL-intermediate domain like"/>
    <property type="match status" value="1"/>
</dbReference>
<dbReference type="PROSITE" id="PS00296">
    <property type="entry name" value="CHAPERONINS_CPN60"/>
    <property type="match status" value="1"/>
</dbReference>
<protein>
    <recommendedName>
        <fullName evidence="1">Chaperonin GroEL</fullName>
        <ecNumber evidence="1">5.6.1.7</ecNumber>
    </recommendedName>
    <alternativeName>
        <fullName evidence="1">60 kDa chaperonin</fullName>
    </alternativeName>
    <alternativeName>
        <fullName evidence="1">Chaperonin-60</fullName>
        <shortName evidence="1">Cpn60</shortName>
    </alternativeName>
</protein>
<name>CH60_PASMU</name>
<reference key="1">
    <citation type="journal article" date="1995" name="Gene">
        <title>Cloning and sequence of the groESL heat-shock operon of Pasteurella multocida.</title>
        <authorList>
            <person name="Love B.C."/>
            <person name="Hansen L.M."/>
            <person name="Hirsh D.C."/>
        </authorList>
    </citation>
    <scope>NUCLEOTIDE SEQUENCE [GENOMIC DNA]</scope>
    <source>
        <strain>ATCC 15742 / P1059</strain>
    </source>
</reference>
<reference key="2">
    <citation type="journal article" date="2001" name="Proc. Natl. Acad. Sci. U.S.A.">
        <title>Complete genomic sequence of Pasteurella multocida Pm70.</title>
        <authorList>
            <person name="May B.J."/>
            <person name="Zhang Q."/>
            <person name="Li L.L."/>
            <person name="Paustian M.L."/>
            <person name="Whittam T.S."/>
            <person name="Kapur V."/>
        </authorList>
    </citation>
    <scope>NUCLEOTIDE SEQUENCE [LARGE SCALE GENOMIC DNA]</scope>
    <source>
        <strain>Pm70</strain>
    </source>
</reference>
<organism>
    <name type="scientific">Pasteurella multocida (strain Pm70)</name>
    <dbReference type="NCBI Taxonomy" id="272843"/>
    <lineage>
        <taxon>Bacteria</taxon>
        <taxon>Pseudomonadati</taxon>
        <taxon>Pseudomonadota</taxon>
        <taxon>Gammaproteobacteria</taxon>
        <taxon>Pasteurellales</taxon>
        <taxon>Pasteurellaceae</taxon>
        <taxon>Pasteurella</taxon>
    </lineage>
</organism>
<keyword id="KW-0067">ATP-binding</keyword>
<keyword id="KW-0143">Chaperone</keyword>
<keyword id="KW-0963">Cytoplasm</keyword>
<keyword id="KW-0413">Isomerase</keyword>
<keyword id="KW-0547">Nucleotide-binding</keyword>
<keyword id="KW-1185">Reference proteome</keyword>
<accession>Q59687</accession>
<comment type="function">
    <text evidence="1">Together with its co-chaperonin GroES, plays an essential role in assisting protein folding. The GroEL-GroES system forms a nano-cage that allows encapsulation of the non-native substrate proteins and provides a physical environment optimized to promote and accelerate protein folding.</text>
</comment>
<comment type="catalytic activity">
    <reaction evidence="1">
        <text>ATP + H2O + a folded polypeptide = ADP + phosphate + an unfolded polypeptide.</text>
        <dbReference type="EC" id="5.6.1.7"/>
    </reaction>
</comment>
<comment type="subunit">
    <text evidence="1">Forms a cylinder of 14 subunits composed of two heptameric rings stacked back-to-back. Interacts with the co-chaperonin GroES.</text>
</comment>
<comment type="subcellular location">
    <subcellularLocation>
        <location evidence="1">Cytoplasm</location>
    </subcellularLocation>
</comment>
<comment type="similarity">
    <text evidence="1">Belongs to the chaperonin (HSP60) family.</text>
</comment>
<gene>
    <name evidence="1" type="primary">groEL</name>
    <name evidence="1" type="synonym">groL</name>
    <name type="synonym">mopA</name>
    <name type="ordered locus">PM1107</name>
</gene>
<feature type="chain" id="PRO_0000063474" description="Chaperonin GroEL">
    <location>
        <begin position="1"/>
        <end position="547"/>
    </location>
</feature>
<feature type="binding site" evidence="1">
    <location>
        <begin position="30"/>
        <end position="33"/>
    </location>
    <ligand>
        <name>ATP</name>
        <dbReference type="ChEBI" id="CHEBI:30616"/>
    </ligand>
</feature>
<feature type="binding site" evidence="1">
    <location>
        <position position="51"/>
    </location>
    <ligand>
        <name>ATP</name>
        <dbReference type="ChEBI" id="CHEBI:30616"/>
    </ligand>
</feature>
<feature type="binding site" evidence="1">
    <location>
        <begin position="87"/>
        <end position="91"/>
    </location>
    <ligand>
        <name>ATP</name>
        <dbReference type="ChEBI" id="CHEBI:30616"/>
    </ligand>
</feature>
<feature type="binding site" evidence="1">
    <location>
        <position position="415"/>
    </location>
    <ligand>
        <name>ATP</name>
        <dbReference type="ChEBI" id="CHEBI:30616"/>
    </ligand>
</feature>
<feature type="binding site" evidence="1">
    <location>
        <position position="495"/>
    </location>
    <ligand>
        <name>ATP</name>
        <dbReference type="ChEBI" id="CHEBI:30616"/>
    </ligand>
</feature>
<feature type="sequence conflict" description="In Ref. 1; AAA84916." evidence="2" ref="1">
    <original>S</original>
    <variation>N</variation>
    <location>
        <position position="424"/>
    </location>
</feature>
<feature type="sequence conflict" description="In Ref. 1; AAA84916." evidence="2" ref="1">
    <original>I</original>
    <variation>V</variation>
    <location>
        <position position="464"/>
    </location>
</feature>
<proteinExistence type="inferred from homology"/>
<evidence type="ECO:0000255" key="1">
    <source>
        <dbReference type="HAMAP-Rule" id="MF_00600"/>
    </source>
</evidence>
<evidence type="ECO:0000305" key="2"/>